<name>MATK_PHAAO</name>
<accession>Q3BAR2</accession>
<dbReference type="EMBL" id="AY916449">
    <property type="protein sequence ID" value="AAW82483.1"/>
    <property type="molecule type" value="Genomic_DNA"/>
</dbReference>
<dbReference type="RefSeq" id="YP_358556.2">
    <property type="nucleotide sequence ID" value="NC_007499.1"/>
</dbReference>
<dbReference type="GeneID" id="3741671"/>
<dbReference type="GO" id="GO:0009507">
    <property type="term" value="C:chloroplast"/>
    <property type="evidence" value="ECO:0007669"/>
    <property type="project" value="UniProtKB-SubCell"/>
</dbReference>
<dbReference type="GO" id="GO:0003723">
    <property type="term" value="F:RNA binding"/>
    <property type="evidence" value="ECO:0007669"/>
    <property type="project" value="UniProtKB-KW"/>
</dbReference>
<dbReference type="GO" id="GO:0006397">
    <property type="term" value="P:mRNA processing"/>
    <property type="evidence" value="ECO:0007669"/>
    <property type="project" value="UniProtKB-KW"/>
</dbReference>
<dbReference type="GO" id="GO:0008380">
    <property type="term" value="P:RNA splicing"/>
    <property type="evidence" value="ECO:0007669"/>
    <property type="project" value="UniProtKB-UniRule"/>
</dbReference>
<dbReference type="GO" id="GO:0008033">
    <property type="term" value="P:tRNA processing"/>
    <property type="evidence" value="ECO:0007669"/>
    <property type="project" value="UniProtKB-KW"/>
</dbReference>
<dbReference type="HAMAP" id="MF_01390">
    <property type="entry name" value="MatK"/>
    <property type="match status" value="1"/>
</dbReference>
<dbReference type="InterPro" id="IPR024937">
    <property type="entry name" value="Domain_X"/>
</dbReference>
<dbReference type="InterPro" id="IPR002866">
    <property type="entry name" value="Maturase_MatK"/>
</dbReference>
<dbReference type="InterPro" id="IPR024942">
    <property type="entry name" value="Maturase_MatK_N"/>
</dbReference>
<dbReference type="PANTHER" id="PTHR34811">
    <property type="entry name" value="MATURASE K"/>
    <property type="match status" value="1"/>
</dbReference>
<dbReference type="PANTHER" id="PTHR34811:SF1">
    <property type="entry name" value="MATURASE K"/>
    <property type="match status" value="1"/>
</dbReference>
<dbReference type="Pfam" id="PF01348">
    <property type="entry name" value="Intron_maturas2"/>
    <property type="match status" value="1"/>
</dbReference>
<dbReference type="Pfam" id="PF01824">
    <property type="entry name" value="MatK_N"/>
    <property type="match status" value="1"/>
</dbReference>
<keyword id="KW-0150">Chloroplast</keyword>
<keyword id="KW-0507">mRNA processing</keyword>
<keyword id="KW-0934">Plastid</keyword>
<keyword id="KW-0694">RNA-binding</keyword>
<keyword id="KW-0819">tRNA processing</keyword>
<feature type="chain" id="PRO_0000355956" description="Maturase K">
    <location>
        <begin position="1"/>
        <end position="446"/>
    </location>
</feature>
<organism>
    <name type="scientific">Phalaenopsis aphrodite subsp. formosana</name>
    <name type="common">Moth orchid</name>
    <dbReference type="NCBI Taxonomy" id="308872"/>
    <lineage>
        <taxon>Eukaryota</taxon>
        <taxon>Viridiplantae</taxon>
        <taxon>Streptophyta</taxon>
        <taxon>Embryophyta</taxon>
        <taxon>Tracheophyta</taxon>
        <taxon>Spermatophyta</taxon>
        <taxon>Magnoliopsida</taxon>
        <taxon>Liliopsida</taxon>
        <taxon>Asparagales</taxon>
        <taxon>Orchidaceae</taxon>
        <taxon>Epidendroideae</taxon>
        <taxon>Vandeae</taxon>
        <taxon>Aeridinae</taxon>
        <taxon>Phalaenopsis</taxon>
    </lineage>
</organism>
<proteinExistence type="inferred from homology"/>
<comment type="function">
    <text evidence="1">Usually encoded in the trnK tRNA gene intron. Probably assists in splicing its own and other chloroplast group II introns.</text>
</comment>
<comment type="subcellular location">
    <subcellularLocation>
        <location>Plastid</location>
        <location>Chloroplast</location>
    </subcellularLocation>
</comment>
<comment type="similarity">
    <text evidence="1">Belongs to the intron maturase 2 family. MatK subfamily.</text>
</comment>
<reference key="1">
    <citation type="journal article" date="2006" name="Mol. Biol. Evol.">
        <title>The chloroplast genome of Phalaenopsis aphrodite (Orchidaceae): comparative analysis of evolutionary rate with that of grasses and its phylogenetic implications.</title>
        <authorList>
            <person name="Chang C.-C."/>
            <person name="Lin H.-C."/>
            <person name="Lin I.-P."/>
            <person name="Chow T.-Y."/>
            <person name="Chen H.-H."/>
            <person name="Chen W.-H."/>
            <person name="Cheng C.-H."/>
            <person name="Lin C.-Y."/>
            <person name="Liu S.-M."/>
            <person name="Chang C.-C."/>
            <person name="Chaw S.-M."/>
        </authorList>
    </citation>
    <scope>NUCLEOTIDE SEQUENCE [LARGE SCALE GENOMIC DNA]</scope>
    <source>
        <strain>cv. Taisugar TS-97</strain>
    </source>
</reference>
<evidence type="ECO:0000255" key="1">
    <source>
        <dbReference type="HAMAP-Rule" id="MF_01390"/>
    </source>
</evidence>
<protein>
    <recommendedName>
        <fullName evidence="1">Maturase K</fullName>
    </recommendedName>
    <alternativeName>
        <fullName evidence="1">Intron maturase</fullName>
    </alternativeName>
</protein>
<geneLocation type="chloroplast"/>
<gene>
    <name evidence="1" type="primary">matK</name>
</gene>
<sequence length="446" mass="53593">MYQQKYLISSVSDSNQNGFSLHKNSFSYHFYSQMVSEGFGVILEISFSSRLVSSLEEKRIPKSQNLRSIHSIFPFLEDKLSHLNYVSDLLIPYPIHMEILVQILQCWIKDVPSLHLLRFIFHEYHNLNSLITSKKSIYVFSKRKKRFLWFLHNFYVYECEYIFLFLRKQSSYLRSISSGVFLERTHFYGKIEYLRVMSCNSFQRILWFLKDIFIHYVRYQGKAILVSKGTLILMNKWKFHFVNFWQFYFHFWFQPYRIRIKQLPNYSFSFMGYFSSVLKNPLVVRNQMLENSFLINTLTNKLDTIAPVIFLIRSLSKAQFCTVLGHPISKSIWTNLSDSDILDRFCRICRNLCRYHSGSSKKQVLYRIKYILRLSCARTLARKHKSTVRTFMRRLGSAFLEEFFFEEEQSLSLVFLQKIPFLLHGLNRERIWYLDIIRMNDLVDHS</sequence>